<sequence length="232" mass="25256">MKTLVICSGGLDSVSLAHKMAAEHELTGLLSFDYGQRHKKELDFAQACAKRLGVPHQIIDIRTIGASLTGSALTDDVDVPDGHYAEETMKVTVVPNRNAIMLAIAFGVAAAQKADAVALAVHGGDHFIYPDCRPGFIEAFQTMQKHALDGYADVKLLAPYVHATKADIVADGAKYRTPFEATWSCYKGADRHCGRCGTCVERREAFHLAGIDDPTSYEDADFWRATTQKRNA</sequence>
<feature type="chain" id="PRO_1000186563" description="7-cyano-7-deazaguanine synthase">
    <location>
        <begin position="1"/>
        <end position="232"/>
    </location>
</feature>
<feature type="binding site" evidence="1">
    <location>
        <begin position="7"/>
        <end position="17"/>
    </location>
    <ligand>
        <name>ATP</name>
        <dbReference type="ChEBI" id="CHEBI:30616"/>
    </ligand>
</feature>
<feature type="binding site" evidence="1">
    <location>
        <position position="185"/>
    </location>
    <ligand>
        <name>Zn(2+)</name>
        <dbReference type="ChEBI" id="CHEBI:29105"/>
    </ligand>
</feature>
<feature type="binding site" evidence="1">
    <location>
        <position position="193"/>
    </location>
    <ligand>
        <name>Zn(2+)</name>
        <dbReference type="ChEBI" id="CHEBI:29105"/>
    </ligand>
</feature>
<feature type="binding site" evidence="1">
    <location>
        <position position="196"/>
    </location>
    <ligand>
        <name>Zn(2+)</name>
        <dbReference type="ChEBI" id="CHEBI:29105"/>
    </ligand>
</feature>
<feature type="binding site" evidence="1">
    <location>
        <position position="199"/>
    </location>
    <ligand>
        <name>Zn(2+)</name>
        <dbReference type="ChEBI" id="CHEBI:29105"/>
    </ligand>
</feature>
<organism>
    <name type="scientific">Brucella melitensis biotype 2 (strain ATCC 23457)</name>
    <dbReference type="NCBI Taxonomy" id="546272"/>
    <lineage>
        <taxon>Bacteria</taxon>
        <taxon>Pseudomonadati</taxon>
        <taxon>Pseudomonadota</taxon>
        <taxon>Alphaproteobacteria</taxon>
        <taxon>Hyphomicrobiales</taxon>
        <taxon>Brucellaceae</taxon>
        <taxon>Brucella/Ochrobactrum group</taxon>
        <taxon>Brucella</taxon>
    </lineage>
</organism>
<gene>
    <name evidence="1" type="primary">queC</name>
    <name type="ordered locus">BMEA_A2029</name>
</gene>
<accession>C0RFL5</accession>
<reference key="1">
    <citation type="submission" date="2009-03" db="EMBL/GenBank/DDBJ databases">
        <title>Brucella melitensis ATCC 23457 whole genome shotgun sequencing project.</title>
        <authorList>
            <person name="Setubal J.C."/>
            <person name="Boyle S."/>
            <person name="Crasta O.R."/>
            <person name="Gillespie J.J."/>
            <person name="Kenyon R.W."/>
            <person name="Lu J."/>
            <person name="Mane S."/>
            <person name="Nagrani S."/>
            <person name="Shallom J.M."/>
            <person name="Shallom S."/>
            <person name="Shukla M."/>
            <person name="Snyder E.E."/>
            <person name="Sobral B.W."/>
            <person name="Wattam A.R."/>
            <person name="Will R."/>
            <person name="Williams K."/>
            <person name="Yoo H."/>
            <person name="Munk C."/>
            <person name="Tapia R."/>
            <person name="Han C."/>
            <person name="Detter J.C."/>
            <person name="Bruce D."/>
            <person name="Brettin T.S."/>
        </authorList>
    </citation>
    <scope>NUCLEOTIDE SEQUENCE [LARGE SCALE GENOMIC DNA]</scope>
    <source>
        <strain>ATCC 23457</strain>
    </source>
</reference>
<proteinExistence type="inferred from homology"/>
<protein>
    <recommendedName>
        <fullName evidence="1">7-cyano-7-deazaguanine synthase</fullName>
        <ecNumber evidence="1">6.3.4.20</ecNumber>
    </recommendedName>
    <alternativeName>
        <fullName evidence="1">7-cyano-7-carbaguanine synthase</fullName>
    </alternativeName>
    <alternativeName>
        <fullName evidence="1">PreQ(0) synthase</fullName>
    </alternativeName>
    <alternativeName>
        <fullName evidence="1">Queuosine biosynthesis protein QueC</fullName>
    </alternativeName>
</protein>
<dbReference type="EC" id="6.3.4.20" evidence="1"/>
<dbReference type="EMBL" id="CP001488">
    <property type="protein sequence ID" value="ACO01687.1"/>
    <property type="molecule type" value="Genomic_DNA"/>
</dbReference>
<dbReference type="RefSeq" id="WP_002965038.1">
    <property type="nucleotide sequence ID" value="NC_012441.1"/>
</dbReference>
<dbReference type="SMR" id="C0RFL5"/>
<dbReference type="GeneID" id="97534751"/>
<dbReference type="KEGG" id="bmi:BMEA_A2029"/>
<dbReference type="HOGENOM" id="CLU_081854_1_0_5"/>
<dbReference type="UniPathway" id="UPA00391"/>
<dbReference type="Proteomes" id="UP000001748">
    <property type="component" value="Chromosome I"/>
</dbReference>
<dbReference type="GO" id="GO:0005524">
    <property type="term" value="F:ATP binding"/>
    <property type="evidence" value="ECO:0007669"/>
    <property type="project" value="UniProtKB-UniRule"/>
</dbReference>
<dbReference type="GO" id="GO:0016879">
    <property type="term" value="F:ligase activity, forming carbon-nitrogen bonds"/>
    <property type="evidence" value="ECO:0007669"/>
    <property type="project" value="UniProtKB-UniRule"/>
</dbReference>
<dbReference type="GO" id="GO:0008270">
    <property type="term" value="F:zinc ion binding"/>
    <property type="evidence" value="ECO:0007669"/>
    <property type="project" value="UniProtKB-UniRule"/>
</dbReference>
<dbReference type="GO" id="GO:0008616">
    <property type="term" value="P:queuosine biosynthetic process"/>
    <property type="evidence" value="ECO:0007669"/>
    <property type="project" value="UniProtKB-UniRule"/>
</dbReference>
<dbReference type="CDD" id="cd01995">
    <property type="entry name" value="QueC-like"/>
    <property type="match status" value="1"/>
</dbReference>
<dbReference type="Gene3D" id="3.40.50.620">
    <property type="entry name" value="HUPs"/>
    <property type="match status" value="1"/>
</dbReference>
<dbReference type="HAMAP" id="MF_01633">
    <property type="entry name" value="QueC"/>
    <property type="match status" value="1"/>
</dbReference>
<dbReference type="InterPro" id="IPR018317">
    <property type="entry name" value="QueC"/>
</dbReference>
<dbReference type="InterPro" id="IPR014729">
    <property type="entry name" value="Rossmann-like_a/b/a_fold"/>
</dbReference>
<dbReference type="NCBIfam" id="TIGR00364">
    <property type="entry name" value="7-cyano-7-deazaguanine synthase QueC"/>
    <property type="match status" value="1"/>
</dbReference>
<dbReference type="PANTHER" id="PTHR42914">
    <property type="entry name" value="7-CYANO-7-DEAZAGUANINE SYNTHASE"/>
    <property type="match status" value="1"/>
</dbReference>
<dbReference type="PANTHER" id="PTHR42914:SF1">
    <property type="entry name" value="7-CYANO-7-DEAZAGUANINE SYNTHASE"/>
    <property type="match status" value="1"/>
</dbReference>
<dbReference type="Pfam" id="PF06508">
    <property type="entry name" value="QueC"/>
    <property type="match status" value="1"/>
</dbReference>
<dbReference type="PIRSF" id="PIRSF006293">
    <property type="entry name" value="ExsB"/>
    <property type="match status" value="1"/>
</dbReference>
<dbReference type="SUPFAM" id="SSF52402">
    <property type="entry name" value="Adenine nucleotide alpha hydrolases-like"/>
    <property type="match status" value="1"/>
</dbReference>
<name>QUEC_BRUMB</name>
<comment type="function">
    <text evidence="1">Catalyzes the ATP-dependent conversion of 7-carboxy-7-deazaguanine (CDG) to 7-cyano-7-deazaguanine (preQ(0)).</text>
</comment>
<comment type="catalytic activity">
    <reaction evidence="1">
        <text>7-carboxy-7-deazaguanine + NH4(+) + ATP = 7-cyano-7-deazaguanine + ADP + phosphate + H2O + H(+)</text>
        <dbReference type="Rhea" id="RHEA:27982"/>
        <dbReference type="ChEBI" id="CHEBI:15377"/>
        <dbReference type="ChEBI" id="CHEBI:15378"/>
        <dbReference type="ChEBI" id="CHEBI:28938"/>
        <dbReference type="ChEBI" id="CHEBI:30616"/>
        <dbReference type="ChEBI" id="CHEBI:43474"/>
        <dbReference type="ChEBI" id="CHEBI:45075"/>
        <dbReference type="ChEBI" id="CHEBI:61036"/>
        <dbReference type="ChEBI" id="CHEBI:456216"/>
        <dbReference type="EC" id="6.3.4.20"/>
    </reaction>
</comment>
<comment type="cofactor">
    <cofactor evidence="1">
        <name>Zn(2+)</name>
        <dbReference type="ChEBI" id="CHEBI:29105"/>
    </cofactor>
    <text evidence="1">Binds 1 zinc ion per subunit.</text>
</comment>
<comment type="pathway">
    <text evidence="1">Purine metabolism; 7-cyano-7-deazaguanine biosynthesis.</text>
</comment>
<comment type="similarity">
    <text evidence="1">Belongs to the QueC family.</text>
</comment>
<keyword id="KW-0067">ATP-binding</keyword>
<keyword id="KW-0436">Ligase</keyword>
<keyword id="KW-0479">Metal-binding</keyword>
<keyword id="KW-0547">Nucleotide-binding</keyword>
<keyword id="KW-0671">Queuosine biosynthesis</keyword>
<keyword id="KW-0862">Zinc</keyword>
<evidence type="ECO:0000255" key="1">
    <source>
        <dbReference type="HAMAP-Rule" id="MF_01633"/>
    </source>
</evidence>